<organism>
    <name type="scientific">Homo sapiens</name>
    <name type="common">Human</name>
    <dbReference type="NCBI Taxonomy" id="9606"/>
    <lineage>
        <taxon>Eukaryota</taxon>
        <taxon>Metazoa</taxon>
        <taxon>Chordata</taxon>
        <taxon>Craniata</taxon>
        <taxon>Vertebrata</taxon>
        <taxon>Euteleostomi</taxon>
        <taxon>Mammalia</taxon>
        <taxon>Eutheria</taxon>
        <taxon>Euarchontoglires</taxon>
        <taxon>Primates</taxon>
        <taxon>Haplorrhini</taxon>
        <taxon>Catarrhini</taxon>
        <taxon>Hominidae</taxon>
        <taxon>Homo</taxon>
    </lineage>
</organism>
<accession>Q8IZJ0</accession>
<accession>Q45KQ8</accession>
<accession>Q6VN55</accession>
<accession>Q8IWL7</accession>
<proteinExistence type="evidence at transcript level"/>
<gene>
    <name type="primary">IFNL2</name>
    <name type="synonym">IL28A</name>
    <name type="synonym">ZCYTO20</name>
</gene>
<name>IFNL2_HUMAN</name>
<protein>
    <recommendedName>
        <fullName>Interferon lambda-2</fullName>
        <shortName>IFN-lambda-2</shortName>
    </recommendedName>
    <alternativeName>
        <fullName>Cytokine Zcyto20</fullName>
    </alternativeName>
    <alternativeName>
        <fullName>Interleukin-28A</fullName>
        <shortName>IL-28A</shortName>
    </alternativeName>
</protein>
<evidence type="ECO:0000255" key="1"/>
<evidence type="ECO:0000269" key="2">
    <source>
    </source>
</evidence>
<evidence type="ECO:0000269" key="3">
    <source>
    </source>
</evidence>
<evidence type="ECO:0000269" key="4">
    <source>
    </source>
</evidence>
<evidence type="ECO:0000305" key="5"/>
<comment type="function">
    <text evidence="2 3 4">Cytokine with antiviral, antitumour and immunomodulatory activities. Plays a critical role in the antiviral host defense, predominantly in the epithelial tissues. Acts as a ligand for the heterodimeric class II cytokine receptor composed of IL10RB and IFNLR1, and receptor engagement leads to the activation of the JAK/STAT signaling pathway resulting in the expression of IFN-stimulated genes (ISG), which mediate the antiviral state. Has a restricted receptor distribution and therefore restricted targets: is primarily active in epithelial cells and this cell type-selective action is because of the epithelial cell-specific expression of its receptor IFNLR1. Seems not to be essential for early virus-activated host defense in vaginal infection, but plays an important role in Toll-like receptor (TLR)-induced antiviral defense. Plays a significant role in the antiviral immune defense in the intestinal epithelium. Exerts an immunomodulatory effect by up-regulating MHC class I antigen expression.</text>
</comment>
<comment type="subcellular location">
    <subcellularLocation>
        <location evidence="3">Secreted</location>
    </subcellularLocation>
</comment>
<comment type="induction">
    <text evidence="2 3">By viral infections or double-stranded RNA.</text>
</comment>
<comment type="similarity">
    <text evidence="5">Belongs to the lambda interferon family.</text>
</comment>
<comment type="caution">
    <text evidence="5">It is uncertain whether Met-1 or Met-5 is the initiator.</text>
</comment>
<comment type="sequence caution" evidence="5">
    <conflict type="erroneous initiation">
        <sequence resource="EMBL-CDS" id="AAR24510"/>
    </conflict>
    <text>Truncated N-terminus.</text>
</comment>
<comment type="online information" name="Wikipedia">
    <link uri="https://en.wikipedia.org/wiki/Interleukin_28"/>
    <text>Interleukin-28 entry</text>
</comment>
<keyword id="KW-0051">Antiviral defense</keyword>
<keyword id="KW-0202">Cytokine</keyword>
<keyword id="KW-1185">Reference proteome</keyword>
<keyword id="KW-0964">Secreted</keyword>
<keyword id="KW-0732">Signal</keyword>
<reference key="1">
    <citation type="journal article" date="2003" name="Nat. Immunol.">
        <title>IL-28, IL-29 and their class II cytokine receptor IL-28R.</title>
        <authorList>
            <person name="Sheppard P."/>
            <person name="Kindsvogel W."/>
            <person name="Xu W."/>
            <person name="Henderson K."/>
            <person name="Schlutsmeyer S."/>
            <person name="Whitmore T.E."/>
            <person name="Kuestner R."/>
            <person name="Garrigues U."/>
            <person name="Birks C."/>
            <person name="Roraback J."/>
            <person name="Ostrander C."/>
            <person name="Dong D."/>
            <person name="Shin J."/>
            <person name="Presnell S."/>
            <person name="Fox B."/>
            <person name="Haldeman B."/>
            <person name="Cooper E."/>
            <person name="Taft D."/>
            <person name="Gilbert T."/>
            <person name="Grant F.J."/>
            <person name="Tackett M."/>
            <person name="Krivan W."/>
            <person name="McKnight G."/>
            <person name="Clegg C."/>
            <person name="Foster D."/>
            <person name="Klucher K.M."/>
        </authorList>
    </citation>
    <scope>NUCLEOTIDE SEQUENCE [MRNA]</scope>
    <scope>FUNCTION</scope>
    <scope>INDUCTION</scope>
</reference>
<reference key="2">
    <citation type="journal article" date="2005" name="Virol. J.">
        <title>Novel type I interferon IL-28A suppresses hepatitis C viral RNA replication.</title>
        <authorList>
            <person name="Zhu H."/>
            <person name="Butera M."/>
            <person name="Nelson D."/>
            <person name="Liu C."/>
        </authorList>
    </citation>
    <scope>NUCLEOTIDE SEQUENCE [MRNA]</scope>
</reference>
<reference key="3">
    <citation type="journal article" date="2004" name="Genome Res.">
        <title>The status, quality, and expansion of the NIH full-length cDNA project: the Mammalian Gene Collection (MGC).</title>
        <authorList>
            <consortium name="The MGC Project Team"/>
        </authorList>
    </citation>
    <scope>NUCLEOTIDE SEQUENCE [LARGE SCALE MRNA]</scope>
</reference>
<reference key="4">
    <citation type="journal article" date="2003" name="Nat. Immunol.">
        <title>IFN-lambdas mediate antiviral protection through a distinct class II cytokine receptor complex.</title>
        <authorList>
            <person name="Kotenko S.V."/>
            <person name="Gallagher G."/>
            <person name="Baurin V.V."/>
            <person name="Lewis-Antes A."/>
            <person name="Shen M."/>
            <person name="Shah N.K."/>
            <person name="Langer J.A."/>
            <person name="Sheikh F."/>
            <person name="Dickensheets H."/>
            <person name="Donnelly R.P."/>
        </authorList>
    </citation>
    <scope>NUCLEOTIDE SEQUENCE [MRNA] OF 5-200</scope>
    <scope>FUNCTION</scope>
    <scope>SUBCELLULAR LOCATION</scope>
    <scope>INDUCTION</scope>
</reference>
<reference key="5">
    <citation type="journal article" date="2006" name="Acta Pharmacol. Sin.">
        <title>Liposome-mediated IL-28 and IL-29 expression in A549 cells and anti-viral effect of IL-28 and IL-29 on WISH cells.</title>
        <authorList>
            <person name="Li M.C."/>
            <person name="Wang H.Y."/>
            <person name="Wang H.Y."/>
            <person name="Li T."/>
            <person name="He S.H."/>
        </authorList>
    </citation>
    <scope>NUCLEOTIDE SEQUENCE [MRNA] OF 4-200</scope>
    <scope>FUNCTION</scope>
    <source>
        <tissue>Peripheral blood leukocyte</tissue>
    </source>
</reference>
<reference key="6">
    <citation type="journal article" date="2010" name="J. Interferon Cytokine Res.">
        <title>Interferon-lambda: a new addition to an old family.</title>
        <authorList>
            <person name="Donnelly R.P."/>
            <person name="Kotenko S.V."/>
        </authorList>
    </citation>
    <scope>REVIEW</scope>
</reference>
<reference key="7">
    <citation type="journal article" date="2014" name="J. Innate Immun.">
        <title>Interferon-lambda in the context of viral infections: production, response and therapeutic implications.</title>
        <authorList>
            <person name="Hermant P."/>
            <person name="Michiels T."/>
        </authorList>
    </citation>
    <scope>REVIEW</scope>
</reference>
<sequence length="200" mass="22288">MKLDMTGDCTPVLVLMAAVLTVTGAVPVARLHGALPDARGCHIAQFKSLSPQELQAFKRAKDALEESLLLKDCRCHSRLFPRTWDLRQLQVRERPMALEAELALTLKVLEATADTDPALVDVLDQPLHTLHHILSQFRACIQPQPTAGPRTRGRLHHWLYRLQEAPKKESPGCLEASVTFNLFRLLTRDLNCVASGDLCV</sequence>
<feature type="signal peptide" evidence="1">
    <location>
        <begin position="1"/>
        <end position="25"/>
    </location>
</feature>
<feature type="chain" id="PRO_0000015509" description="Interferon lambda-2">
    <location>
        <begin position="26"/>
        <end position="200"/>
    </location>
</feature>
<feature type="sequence variant" id="VAR_053384" description="In dbSNP:rs554971.">
    <original>T</original>
    <variation>M</variation>
    <location>
        <position position="10"/>
    </location>
</feature>
<feature type="sequence variant" id="VAR_053385" description="In dbSNP:rs8103362.">
    <original>T</original>
    <variation>A</variation>
    <location>
        <position position="112"/>
    </location>
</feature>
<feature type="sequence conflict" description="In Ref. 4; AAN86126." evidence="5" ref="4">
    <original>T</original>
    <variation>A</variation>
    <location>
        <position position="151"/>
    </location>
</feature>
<dbReference type="EMBL" id="AY129148">
    <property type="protein sequence ID" value="AAN28263.1"/>
    <property type="molecule type" value="mRNA"/>
</dbReference>
<dbReference type="EMBL" id="DQ126336">
    <property type="protein sequence ID" value="AAZ38827.1"/>
    <property type="molecule type" value="Genomic_DNA"/>
</dbReference>
<dbReference type="EMBL" id="DQ126337">
    <property type="protein sequence ID" value="AAZ38828.1"/>
    <property type="molecule type" value="mRNA"/>
</dbReference>
<dbReference type="EMBL" id="BC113581">
    <property type="protein sequence ID" value="AAI13582.1"/>
    <property type="molecule type" value="mRNA"/>
</dbReference>
<dbReference type="EMBL" id="BC113583">
    <property type="protein sequence ID" value="AAI13584.1"/>
    <property type="molecule type" value="mRNA"/>
</dbReference>
<dbReference type="EMBL" id="AY184373">
    <property type="protein sequence ID" value="AAN86126.1"/>
    <property type="molecule type" value="mRNA"/>
</dbReference>
<dbReference type="EMBL" id="AY336715">
    <property type="protein sequence ID" value="AAR24510.1"/>
    <property type="status" value="ALT_INIT"/>
    <property type="molecule type" value="mRNA"/>
</dbReference>
<dbReference type="CCDS" id="CCDS42567.1"/>
<dbReference type="RefSeq" id="NP_742150.1">
    <property type="nucleotide sequence ID" value="NM_172138.2"/>
</dbReference>
<dbReference type="SMR" id="Q8IZJ0"/>
<dbReference type="BioGRID" id="129394">
    <property type="interactions" value="2"/>
</dbReference>
<dbReference type="ComplexPortal" id="CPX-6012">
    <property type="entry name" value="Interferon lambda receptor-ligand complex, IFNL2 variant"/>
</dbReference>
<dbReference type="FunCoup" id="Q8IZJ0">
    <property type="interactions" value="385"/>
</dbReference>
<dbReference type="IntAct" id="Q8IZJ0">
    <property type="interactions" value="2"/>
</dbReference>
<dbReference type="MINT" id="Q8IZJ0"/>
<dbReference type="STRING" id="9606.ENSP00000333639"/>
<dbReference type="GlyGen" id="Q8IZJ0">
    <property type="glycosylation" value="1 site"/>
</dbReference>
<dbReference type="iPTMnet" id="Q8IZJ0"/>
<dbReference type="PhosphoSitePlus" id="Q8IZJ0"/>
<dbReference type="BioMuta" id="IFNL2"/>
<dbReference type="DMDM" id="55976531"/>
<dbReference type="jPOST" id="Q8IZJ0"/>
<dbReference type="MassIVE" id="Q8IZJ0"/>
<dbReference type="PaxDb" id="9606-ENSP00000333639"/>
<dbReference type="PeptideAtlas" id="Q8IZJ0"/>
<dbReference type="Antibodypedia" id="30284">
    <property type="antibodies" value="375 antibodies from 30 providers"/>
</dbReference>
<dbReference type="DNASU" id="282616"/>
<dbReference type="Ensembl" id="ENST00000331982.6">
    <property type="protein sequence ID" value="ENSP00000333639.5"/>
    <property type="gene ID" value="ENSG00000183709.8"/>
</dbReference>
<dbReference type="Ensembl" id="ENST00000709041.1">
    <property type="protein sequence ID" value="ENSP00000517479.1"/>
    <property type="gene ID" value="ENSG00000291875.1"/>
</dbReference>
<dbReference type="GeneID" id="282616"/>
<dbReference type="KEGG" id="hsa:282616"/>
<dbReference type="MANE-Select" id="ENST00000331982.6">
    <property type="protein sequence ID" value="ENSP00000333639.5"/>
    <property type="RefSeq nucleotide sequence ID" value="NM_172138.2"/>
    <property type="RefSeq protein sequence ID" value="NP_742150.1"/>
</dbReference>
<dbReference type="UCSC" id="uc002oku.2">
    <property type="organism name" value="human"/>
</dbReference>
<dbReference type="AGR" id="HGNC:18364"/>
<dbReference type="CTD" id="282616"/>
<dbReference type="DisGeNET" id="282616"/>
<dbReference type="GeneCards" id="IFNL2"/>
<dbReference type="HGNC" id="HGNC:18364">
    <property type="gene designation" value="IFNL2"/>
</dbReference>
<dbReference type="HPA" id="ENSG00000183709">
    <property type="expression patterns" value="Not detected"/>
</dbReference>
<dbReference type="MIM" id="607401">
    <property type="type" value="gene"/>
</dbReference>
<dbReference type="neXtProt" id="NX_Q8IZJ0"/>
<dbReference type="OpenTargets" id="ENSG00000183709"/>
<dbReference type="PharmGKB" id="PA134934396"/>
<dbReference type="VEuPathDB" id="HostDB:ENSG00000183709"/>
<dbReference type="eggNOG" id="ENOG502SSDC">
    <property type="taxonomic scope" value="Eukaryota"/>
</dbReference>
<dbReference type="GeneTree" id="ENSGT00390000014310"/>
<dbReference type="HOGENOM" id="CLU_120266_0_0_1"/>
<dbReference type="InParanoid" id="Q8IZJ0"/>
<dbReference type="OMA" id="RAESTEC"/>
<dbReference type="OrthoDB" id="7476at9604"/>
<dbReference type="PAN-GO" id="Q8IZJ0">
    <property type="GO annotations" value="4 GO annotations based on evolutionary models"/>
</dbReference>
<dbReference type="PhylomeDB" id="Q8IZJ0"/>
<dbReference type="TreeFam" id="TF336172"/>
<dbReference type="PathwayCommons" id="Q8IZJ0"/>
<dbReference type="Reactome" id="R-HSA-8854691">
    <property type="pathway name" value="Interleukin-20 family signaling"/>
</dbReference>
<dbReference type="SignaLink" id="Q8IZJ0"/>
<dbReference type="SIGNOR" id="Q8IZJ0"/>
<dbReference type="BioGRID-ORCS" id="282616">
    <property type="hits" value="93 hits in 1047 CRISPR screens"/>
</dbReference>
<dbReference type="GenomeRNAi" id="282616"/>
<dbReference type="Pharos" id="Q8IZJ0">
    <property type="development level" value="Tbio"/>
</dbReference>
<dbReference type="PRO" id="PR:Q8IZJ0"/>
<dbReference type="Proteomes" id="UP000005640">
    <property type="component" value="Chromosome 19"/>
</dbReference>
<dbReference type="RNAct" id="Q8IZJ0">
    <property type="molecule type" value="protein"/>
</dbReference>
<dbReference type="Bgee" id="ENSG00000183709">
    <property type="expression patterns" value="Expressed in male germ line stem cell (sensu Vertebrata) in testis and 8 other cell types or tissues"/>
</dbReference>
<dbReference type="GO" id="GO:0005576">
    <property type="term" value="C:extracellular region"/>
    <property type="evidence" value="ECO:0000304"/>
    <property type="project" value="Reactome"/>
</dbReference>
<dbReference type="GO" id="GO:0005615">
    <property type="term" value="C:extracellular space"/>
    <property type="evidence" value="ECO:0000318"/>
    <property type="project" value="GO_Central"/>
</dbReference>
<dbReference type="GO" id="GO:0005125">
    <property type="term" value="F:cytokine activity"/>
    <property type="evidence" value="ECO:0007669"/>
    <property type="project" value="UniProtKB-KW"/>
</dbReference>
<dbReference type="GO" id="GO:0005102">
    <property type="term" value="F:signaling receptor binding"/>
    <property type="evidence" value="ECO:0000318"/>
    <property type="project" value="GO_Central"/>
</dbReference>
<dbReference type="GO" id="GO:0007259">
    <property type="term" value="P:cell surface receptor signaling pathway via JAK-STAT"/>
    <property type="evidence" value="ECO:0007669"/>
    <property type="project" value="InterPro"/>
</dbReference>
<dbReference type="GO" id="GO:0098586">
    <property type="term" value="P:cellular response to virus"/>
    <property type="evidence" value="ECO:0000303"/>
    <property type="project" value="ComplexPortal"/>
</dbReference>
<dbReference type="GO" id="GO:0051607">
    <property type="term" value="P:defense response to virus"/>
    <property type="evidence" value="ECO:0000250"/>
    <property type="project" value="UniProtKB"/>
</dbReference>
<dbReference type="GO" id="GO:0045087">
    <property type="term" value="P:innate immune response"/>
    <property type="evidence" value="ECO:0000318"/>
    <property type="project" value="GO_Central"/>
</dbReference>
<dbReference type="GO" id="GO:0002385">
    <property type="term" value="P:mucosal immune response"/>
    <property type="evidence" value="ECO:0000250"/>
    <property type="project" value="UniProtKB"/>
</dbReference>
<dbReference type="GO" id="GO:0050778">
    <property type="term" value="P:positive regulation of immune response"/>
    <property type="evidence" value="ECO:0007669"/>
    <property type="project" value="InterPro"/>
</dbReference>
<dbReference type="GO" id="GO:0038196">
    <property type="term" value="P:type III interferon-mediated signaling pathway"/>
    <property type="evidence" value="ECO:0000303"/>
    <property type="project" value="ComplexPortal"/>
</dbReference>
<dbReference type="FunFam" id="1.20.1250.60:FF:000001">
    <property type="entry name" value="Interferon lambda 1"/>
    <property type="match status" value="1"/>
</dbReference>
<dbReference type="Gene3D" id="1.20.1250.60">
    <property type="entry name" value="Interferon lambda"/>
    <property type="match status" value="1"/>
</dbReference>
<dbReference type="InterPro" id="IPR038326">
    <property type="entry name" value="IFN-lambda_sf"/>
</dbReference>
<dbReference type="InterPro" id="IPR029177">
    <property type="entry name" value="INF_lambda"/>
</dbReference>
<dbReference type="PANTHER" id="PTHR31943:SF1">
    <property type="entry name" value="INTERFERON LAMBDA-2-RELATED"/>
    <property type="match status" value="1"/>
</dbReference>
<dbReference type="PANTHER" id="PTHR31943">
    <property type="entry name" value="INTERLEUKIN-28 AND 29"/>
    <property type="match status" value="1"/>
</dbReference>
<dbReference type="Pfam" id="PF15177">
    <property type="entry name" value="IL28A"/>
    <property type="match status" value="1"/>
</dbReference>